<dbReference type="EMBL" id="CP001634">
    <property type="protein sequence ID" value="ACR80573.1"/>
    <property type="molecule type" value="Genomic_DNA"/>
</dbReference>
<dbReference type="RefSeq" id="WP_015869216.1">
    <property type="nucleotide sequence ID" value="NC_012785.1"/>
</dbReference>
<dbReference type="SMR" id="C5CGQ4"/>
<dbReference type="STRING" id="521045.Kole_1892"/>
<dbReference type="KEGG" id="kol:Kole_1892"/>
<dbReference type="eggNOG" id="COG0093">
    <property type="taxonomic scope" value="Bacteria"/>
</dbReference>
<dbReference type="HOGENOM" id="CLU_095071_2_1_0"/>
<dbReference type="OrthoDB" id="9806379at2"/>
<dbReference type="Proteomes" id="UP000002382">
    <property type="component" value="Chromosome"/>
</dbReference>
<dbReference type="GO" id="GO:0022625">
    <property type="term" value="C:cytosolic large ribosomal subunit"/>
    <property type="evidence" value="ECO:0007669"/>
    <property type="project" value="TreeGrafter"/>
</dbReference>
<dbReference type="GO" id="GO:0070180">
    <property type="term" value="F:large ribosomal subunit rRNA binding"/>
    <property type="evidence" value="ECO:0007669"/>
    <property type="project" value="TreeGrafter"/>
</dbReference>
<dbReference type="GO" id="GO:0003735">
    <property type="term" value="F:structural constituent of ribosome"/>
    <property type="evidence" value="ECO:0007669"/>
    <property type="project" value="InterPro"/>
</dbReference>
<dbReference type="GO" id="GO:0006412">
    <property type="term" value="P:translation"/>
    <property type="evidence" value="ECO:0007669"/>
    <property type="project" value="UniProtKB-UniRule"/>
</dbReference>
<dbReference type="CDD" id="cd00337">
    <property type="entry name" value="Ribosomal_uL14"/>
    <property type="match status" value="1"/>
</dbReference>
<dbReference type="Gene3D" id="2.40.150.20">
    <property type="entry name" value="Ribosomal protein L14"/>
    <property type="match status" value="1"/>
</dbReference>
<dbReference type="HAMAP" id="MF_01367">
    <property type="entry name" value="Ribosomal_uL14"/>
    <property type="match status" value="1"/>
</dbReference>
<dbReference type="InterPro" id="IPR000218">
    <property type="entry name" value="Ribosomal_uL14"/>
</dbReference>
<dbReference type="InterPro" id="IPR005745">
    <property type="entry name" value="Ribosomal_uL14_bac-type"/>
</dbReference>
<dbReference type="InterPro" id="IPR019972">
    <property type="entry name" value="Ribosomal_uL14_CS"/>
</dbReference>
<dbReference type="InterPro" id="IPR036853">
    <property type="entry name" value="Ribosomal_uL14_sf"/>
</dbReference>
<dbReference type="NCBIfam" id="TIGR01067">
    <property type="entry name" value="rplN_bact"/>
    <property type="match status" value="1"/>
</dbReference>
<dbReference type="PANTHER" id="PTHR11761">
    <property type="entry name" value="50S/60S RIBOSOMAL PROTEIN L14/L23"/>
    <property type="match status" value="1"/>
</dbReference>
<dbReference type="PANTHER" id="PTHR11761:SF3">
    <property type="entry name" value="LARGE RIBOSOMAL SUBUNIT PROTEIN UL14M"/>
    <property type="match status" value="1"/>
</dbReference>
<dbReference type="Pfam" id="PF00238">
    <property type="entry name" value="Ribosomal_L14"/>
    <property type="match status" value="1"/>
</dbReference>
<dbReference type="SMART" id="SM01374">
    <property type="entry name" value="Ribosomal_L14"/>
    <property type="match status" value="1"/>
</dbReference>
<dbReference type="SUPFAM" id="SSF50193">
    <property type="entry name" value="Ribosomal protein L14"/>
    <property type="match status" value="1"/>
</dbReference>
<dbReference type="PROSITE" id="PS00049">
    <property type="entry name" value="RIBOSOMAL_L14"/>
    <property type="match status" value="1"/>
</dbReference>
<feature type="chain" id="PRO_1000214984" description="Large ribosomal subunit protein uL14">
    <location>
        <begin position="1"/>
        <end position="122"/>
    </location>
</feature>
<protein>
    <recommendedName>
        <fullName evidence="1">Large ribosomal subunit protein uL14</fullName>
    </recommendedName>
    <alternativeName>
        <fullName evidence="2">50S ribosomal protein L14</fullName>
    </alternativeName>
</protein>
<organism>
    <name type="scientific">Kosmotoga olearia (strain ATCC BAA-1733 / DSM 21960 / TBF 19.5.1)</name>
    <dbReference type="NCBI Taxonomy" id="521045"/>
    <lineage>
        <taxon>Bacteria</taxon>
        <taxon>Thermotogati</taxon>
        <taxon>Thermotogota</taxon>
        <taxon>Thermotogae</taxon>
        <taxon>Kosmotogales</taxon>
        <taxon>Kosmotogaceae</taxon>
        <taxon>Kosmotoga</taxon>
    </lineage>
</organism>
<name>RL14_KOSOT</name>
<comment type="function">
    <text evidence="1">Binds to 23S rRNA. Forms part of two intersubunit bridges in the 70S ribosome.</text>
</comment>
<comment type="subunit">
    <text evidence="1">Part of the 50S ribosomal subunit. Forms a cluster with proteins L3 and L19. In the 70S ribosome, L14 and L19 interact and together make contacts with the 16S rRNA in bridges B5 and B8.</text>
</comment>
<comment type="similarity">
    <text evidence="1">Belongs to the universal ribosomal protein uL14 family.</text>
</comment>
<proteinExistence type="inferred from homology"/>
<evidence type="ECO:0000255" key="1">
    <source>
        <dbReference type="HAMAP-Rule" id="MF_01367"/>
    </source>
</evidence>
<evidence type="ECO:0000305" key="2"/>
<gene>
    <name evidence="1" type="primary">rplN</name>
    <name type="ordered locus">Kole_1892</name>
</gene>
<sequence length="122" mass="13421">MIQLESYLRVADNSGAKVIKVIQVSGGSKRKTGSIGDIVVASVREAVPNTDIKKGDIVRAVVVRTKKEIRRPDGTYIRFDDNAAVIIDKQNQPKGTRVFGPVARELREKGFSKIASLAQEVW</sequence>
<reference key="1">
    <citation type="submission" date="2009-06" db="EMBL/GenBank/DDBJ databases">
        <title>Complete sequence of Thermotogales bacterium TBF 19.5.1.</title>
        <authorList>
            <consortium name="US DOE Joint Genome Institute"/>
            <person name="Lucas S."/>
            <person name="Copeland A."/>
            <person name="Lapidus A."/>
            <person name="Glavina del Rio T."/>
            <person name="Tice H."/>
            <person name="Bruce D."/>
            <person name="Goodwin L."/>
            <person name="Pitluck S."/>
            <person name="Chertkov O."/>
            <person name="Brettin T."/>
            <person name="Detter J.C."/>
            <person name="Han C."/>
            <person name="Schmutz J."/>
            <person name="Larimer F."/>
            <person name="Land M."/>
            <person name="Hauser L."/>
            <person name="Kyrpides N."/>
            <person name="Ovchinnikova G."/>
            <person name="Noll K."/>
        </authorList>
    </citation>
    <scope>NUCLEOTIDE SEQUENCE [LARGE SCALE GENOMIC DNA]</scope>
    <source>
        <strain>ATCC BAA-1733 / DSM 21960 / TBF 19.5.1</strain>
    </source>
</reference>
<accession>C5CGQ4</accession>
<keyword id="KW-1185">Reference proteome</keyword>
<keyword id="KW-0687">Ribonucleoprotein</keyword>
<keyword id="KW-0689">Ribosomal protein</keyword>
<keyword id="KW-0694">RNA-binding</keyword>
<keyword id="KW-0699">rRNA-binding</keyword>